<name>LLDD_ACTP2</name>
<gene>
    <name evidence="1" type="primary">lldD</name>
    <name type="ordered locus">APL_1849</name>
</gene>
<dbReference type="EC" id="1.1.-.-" evidence="1"/>
<dbReference type="EMBL" id="CP000569">
    <property type="protein sequence ID" value="ABN74931.1"/>
    <property type="molecule type" value="Genomic_DNA"/>
</dbReference>
<dbReference type="RefSeq" id="WP_005599497.1">
    <property type="nucleotide sequence ID" value="NC_009053.1"/>
</dbReference>
<dbReference type="SMR" id="A3N3E5"/>
<dbReference type="STRING" id="416269.APL_1849"/>
<dbReference type="EnsemblBacteria" id="ABN74931">
    <property type="protein sequence ID" value="ABN74931"/>
    <property type="gene ID" value="APL_1849"/>
</dbReference>
<dbReference type="GeneID" id="48600155"/>
<dbReference type="KEGG" id="apl:APL_1849"/>
<dbReference type="eggNOG" id="COG1304">
    <property type="taxonomic scope" value="Bacteria"/>
</dbReference>
<dbReference type="HOGENOM" id="CLU_020639_0_0_6"/>
<dbReference type="Proteomes" id="UP000001432">
    <property type="component" value="Chromosome"/>
</dbReference>
<dbReference type="GO" id="GO:0005886">
    <property type="term" value="C:plasma membrane"/>
    <property type="evidence" value="ECO:0007669"/>
    <property type="project" value="UniProtKB-SubCell"/>
</dbReference>
<dbReference type="GO" id="GO:0010181">
    <property type="term" value="F:FMN binding"/>
    <property type="evidence" value="ECO:0007669"/>
    <property type="project" value="InterPro"/>
</dbReference>
<dbReference type="GO" id="GO:0004459">
    <property type="term" value="F:L-lactate dehydrogenase activity"/>
    <property type="evidence" value="ECO:0007669"/>
    <property type="project" value="UniProtKB-UniRule"/>
</dbReference>
<dbReference type="GO" id="GO:0009060">
    <property type="term" value="P:aerobic respiration"/>
    <property type="evidence" value="ECO:0007669"/>
    <property type="project" value="TreeGrafter"/>
</dbReference>
<dbReference type="GO" id="GO:0006089">
    <property type="term" value="P:lactate metabolic process"/>
    <property type="evidence" value="ECO:0007669"/>
    <property type="project" value="UniProtKB-UniRule"/>
</dbReference>
<dbReference type="CDD" id="cd02809">
    <property type="entry name" value="alpha_hydroxyacid_oxid_FMN"/>
    <property type="match status" value="1"/>
</dbReference>
<dbReference type="FunFam" id="3.20.20.70:FF:000029">
    <property type="entry name" value="L-lactate dehydrogenase"/>
    <property type="match status" value="1"/>
</dbReference>
<dbReference type="Gene3D" id="3.20.20.70">
    <property type="entry name" value="Aldolase class I"/>
    <property type="match status" value="1"/>
</dbReference>
<dbReference type="HAMAP" id="MF_01559">
    <property type="entry name" value="L_lact_dehydr"/>
    <property type="match status" value="1"/>
</dbReference>
<dbReference type="InterPro" id="IPR013785">
    <property type="entry name" value="Aldolase_TIM"/>
</dbReference>
<dbReference type="InterPro" id="IPR012133">
    <property type="entry name" value="Alpha-hydoxy_acid_DH_FMN"/>
</dbReference>
<dbReference type="InterPro" id="IPR000262">
    <property type="entry name" value="FMN-dep_DH"/>
</dbReference>
<dbReference type="InterPro" id="IPR037396">
    <property type="entry name" value="FMN_HAD"/>
</dbReference>
<dbReference type="InterPro" id="IPR008259">
    <property type="entry name" value="FMN_hydac_DH_AS"/>
</dbReference>
<dbReference type="InterPro" id="IPR020920">
    <property type="entry name" value="LldD"/>
</dbReference>
<dbReference type="NCBIfam" id="NF033901">
    <property type="entry name" value="L_lactate_LldD"/>
    <property type="match status" value="1"/>
</dbReference>
<dbReference type="NCBIfam" id="NF008398">
    <property type="entry name" value="PRK11197.1"/>
    <property type="match status" value="1"/>
</dbReference>
<dbReference type="PANTHER" id="PTHR10578:SF85">
    <property type="entry name" value="L-LACTATE DEHYDROGENASE"/>
    <property type="match status" value="1"/>
</dbReference>
<dbReference type="PANTHER" id="PTHR10578">
    <property type="entry name" value="S -2-HYDROXY-ACID OXIDASE-RELATED"/>
    <property type="match status" value="1"/>
</dbReference>
<dbReference type="Pfam" id="PF01070">
    <property type="entry name" value="FMN_dh"/>
    <property type="match status" value="1"/>
</dbReference>
<dbReference type="PIRSF" id="PIRSF000138">
    <property type="entry name" value="Al-hdrx_acd_dh"/>
    <property type="match status" value="1"/>
</dbReference>
<dbReference type="SUPFAM" id="SSF51395">
    <property type="entry name" value="FMN-linked oxidoreductases"/>
    <property type="match status" value="1"/>
</dbReference>
<dbReference type="PROSITE" id="PS00557">
    <property type="entry name" value="FMN_HYDROXY_ACID_DH_1"/>
    <property type="match status" value="1"/>
</dbReference>
<dbReference type="PROSITE" id="PS51349">
    <property type="entry name" value="FMN_HYDROXY_ACID_DH_2"/>
    <property type="match status" value="1"/>
</dbReference>
<organism>
    <name type="scientific">Actinobacillus pleuropneumoniae serotype 5b (strain L20)</name>
    <dbReference type="NCBI Taxonomy" id="416269"/>
    <lineage>
        <taxon>Bacteria</taxon>
        <taxon>Pseudomonadati</taxon>
        <taxon>Pseudomonadota</taxon>
        <taxon>Gammaproteobacteria</taxon>
        <taxon>Pasteurellales</taxon>
        <taxon>Pasteurellaceae</taxon>
        <taxon>Actinobacillus</taxon>
    </lineage>
</organism>
<sequence length="381" mass="41752">MIISSANDYREAARRRVPPFMFHYADGGSFSERTLERNVTDLADLALRQRVLKDMSQLDTEIELFGEKLAMPAVLAPVGACGMYARRGEVQAAQAAENKGIPFTLSTVSICPIEEVTAAIKRPMWFQLYVLKDRGFMKHVLERAKAAGCSTLVFTVDMPTPGARYRDRHSGMSGDYKEIRRALQAVTHPFWAWDVGIKGKPHTLGNVSAYTGKAVGLDDYVVWLGENFDPSISWKDLEWIRDFWDGPMVIKGILDPEDAKDAVRFGADGIVVSNHGGRQLDGALSSARALPSIADAVKGDIKILADSGIRNGLDIVRMLALGADATMLGRAFVYALGAAGKAGVENMLDIFKKEMHVAMTLTSNQKISDITRDALVDLSKL</sequence>
<protein>
    <recommendedName>
        <fullName evidence="1">L-lactate dehydrogenase</fullName>
        <ecNumber evidence="1">1.1.-.-</ecNumber>
    </recommendedName>
</protein>
<evidence type="ECO:0000255" key="1">
    <source>
        <dbReference type="HAMAP-Rule" id="MF_01559"/>
    </source>
</evidence>
<feature type="chain" id="PRO_1000068976" description="L-lactate dehydrogenase">
    <location>
        <begin position="1"/>
        <end position="381"/>
    </location>
</feature>
<feature type="domain" description="FMN hydroxy acid dehydrogenase" evidence="1">
    <location>
        <begin position="1"/>
        <end position="380"/>
    </location>
</feature>
<feature type="active site" description="Proton acceptor" evidence="1">
    <location>
        <position position="275"/>
    </location>
</feature>
<feature type="binding site" evidence="1">
    <location>
        <position position="24"/>
    </location>
    <ligand>
        <name>substrate</name>
    </ligand>
</feature>
<feature type="binding site" evidence="1">
    <location>
        <position position="106"/>
    </location>
    <ligand>
        <name>FMN</name>
        <dbReference type="ChEBI" id="CHEBI:58210"/>
    </ligand>
</feature>
<feature type="binding site" evidence="1">
    <location>
        <position position="127"/>
    </location>
    <ligand>
        <name>FMN</name>
        <dbReference type="ChEBI" id="CHEBI:58210"/>
    </ligand>
</feature>
<feature type="binding site" evidence="1">
    <location>
        <position position="129"/>
    </location>
    <ligand>
        <name>substrate</name>
    </ligand>
</feature>
<feature type="binding site" evidence="1">
    <location>
        <position position="155"/>
    </location>
    <ligand>
        <name>FMN</name>
        <dbReference type="ChEBI" id="CHEBI:58210"/>
    </ligand>
</feature>
<feature type="binding site" evidence="1">
    <location>
        <position position="164"/>
    </location>
    <ligand>
        <name>substrate</name>
    </ligand>
</feature>
<feature type="binding site" evidence="1">
    <location>
        <position position="251"/>
    </location>
    <ligand>
        <name>FMN</name>
        <dbReference type="ChEBI" id="CHEBI:58210"/>
    </ligand>
</feature>
<feature type="binding site" evidence="1">
    <location>
        <position position="278"/>
    </location>
    <ligand>
        <name>substrate</name>
    </ligand>
</feature>
<feature type="binding site" evidence="1">
    <location>
        <begin position="306"/>
        <end position="330"/>
    </location>
    <ligand>
        <name>FMN</name>
        <dbReference type="ChEBI" id="CHEBI:58210"/>
    </ligand>
</feature>
<proteinExistence type="inferred from homology"/>
<comment type="function">
    <text evidence="1">Catalyzes the conversion of L-lactate to pyruvate. Is coupled to the respiratory chain.</text>
</comment>
<comment type="catalytic activity">
    <reaction evidence="1">
        <text>(S)-lactate + A = pyruvate + AH2</text>
        <dbReference type="Rhea" id="RHEA:45816"/>
        <dbReference type="ChEBI" id="CHEBI:13193"/>
        <dbReference type="ChEBI" id="CHEBI:15361"/>
        <dbReference type="ChEBI" id="CHEBI:16651"/>
        <dbReference type="ChEBI" id="CHEBI:17499"/>
    </reaction>
</comment>
<comment type="cofactor">
    <cofactor evidence="1">
        <name>FMN</name>
        <dbReference type="ChEBI" id="CHEBI:58210"/>
    </cofactor>
</comment>
<comment type="subcellular location">
    <subcellularLocation>
        <location evidence="1">Cell inner membrane</location>
        <topology evidence="1">Peripheral membrane protein</topology>
    </subcellularLocation>
</comment>
<comment type="similarity">
    <text evidence="1">Belongs to the FMN-dependent alpha-hydroxy acid dehydrogenase family.</text>
</comment>
<accession>A3N3E5</accession>
<keyword id="KW-0997">Cell inner membrane</keyword>
<keyword id="KW-1003">Cell membrane</keyword>
<keyword id="KW-0285">Flavoprotein</keyword>
<keyword id="KW-0288">FMN</keyword>
<keyword id="KW-0472">Membrane</keyword>
<keyword id="KW-0560">Oxidoreductase</keyword>
<keyword id="KW-1185">Reference proteome</keyword>
<reference key="1">
    <citation type="journal article" date="2008" name="J. Bacteriol.">
        <title>The complete genome sequence of Actinobacillus pleuropneumoniae L20 (serotype 5b).</title>
        <authorList>
            <person name="Foote S.J."/>
            <person name="Bosse J.T."/>
            <person name="Bouevitch A.B."/>
            <person name="Langford P.R."/>
            <person name="Young N.M."/>
            <person name="Nash J.H.E."/>
        </authorList>
    </citation>
    <scope>NUCLEOTIDE SEQUENCE [LARGE SCALE GENOMIC DNA]</scope>
    <source>
        <strain>L20</strain>
    </source>
</reference>